<reference key="1">
    <citation type="journal article" date="2003" name="Mol. Microbiol.">
        <title>Genome-based analysis of virulence genes in a non-biofilm-forming Staphylococcus epidermidis strain (ATCC 12228).</title>
        <authorList>
            <person name="Zhang Y.-Q."/>
            <person name="Ren S.-X."/>
            <person name="Li H.-L."/>
            <person name="Wang Y.-X."/>
            <person name="Fu G."/>
            <person name="Yang J."/>
            <person name="Qin Z.-Q."/>
            <person name="Miao Y.-G."/>
            <person name="Wang W.-Y."/>
            <person name="Chen R.-S."/>
            <person name="Shen Y."/>
            <person name="Chen Z."/>
            <person name="Yuan Z.-H."/>
            <person name="Zhao G.-P."/>
            <person name="Qu D."/>
            <person name="Danchin A."/>
            <person name="Wen Y.-M."/>
        </authorList>
    </citation>
    <scope>NUCLEOTIDE SEQUENCE [LARGE SCALE GENOMIC DNA]</scope>
    <source>
        <strain>ATCC 12228 / FDA PCI 1200</strain>
    </source>
</reference>
<protein>
    <recommendedName>
        <fullName>Protein VraC</fullName>
    </recommendedName>
</protein>
<proteinExistence type="predicted"/>
<feature type="chain" id="PRO_0000065918" description="Protein VraC">
    <location>
        <begin position="1"/>
        <end position="120"/>
    </location>
</feature>
<sequence length="120" mass="14534">MQLYLKDGMEIREVQFTNEEVQNYCELLNIKYDHYVPTLMCAKLWPQFELFQSFSKKPIILKETHIKTQHQLQVDCTYEATLHKVSQKLIKNIIKYTYGLEINKDKKHCMYIKQIFIEVR</sequence>
<accession>Q8CTQ9</accession>
<dbReference type="EMBL" id="AE015929">
    <property type="protein sequence ID" value="AAO03944.1"/>
    <property type="molecule type" value="Genomic_DNA"/>
</dbReference>
<dbReference type="RefSeq" id="NP_763902.1">
    <property type="nucleotide sequence ID" value="NC_004461.1"/>
</dbReference>
<dbReference type="RefSeq" id="WP_001832023.1">
    <property type="nucleotide sequence ID" value="NZ_WBME01000045.1"/>
</dbReference>
<dbReference type="SMR" id="Q8CTQ9"/>
<dbReference type="KEGG" id="sep:SE_0347"/>
<dbReference type="PATRIC" id="fig|176280.10.peg.320"/>
<dbReference type="eggNOG" id="ENOG5030EW4">
    <property type="taxonomic scope" value="Bacteria"/>
</dbReference>
<dbReference type="HOGENOM" id="CLU_2195295_0_0_9"/>
<dbReference type="OrthoDB" id="2407806at2"/>
<dbReference type="Proteomes" id="UP000001411">
    <property type="component" value="Chromosome"/>
</dbReference>
<dbReference type="InterPro" id="IPR016994">
    <property type="entry name" value="UCP032370_VraC"/>
</dbReference>
<dbReference type="PIRSF" id="PIRSF032370">
    <property type="entry name" value="UCP032370_VraC"/>
    <property type="match status" value="1"/>
</dbReference>
<gene>
    <name type="ordered locus">SE_0347</name>
</gene>
<name>VRAC_STAES</name>
<organism>
    <name type="scientific">Staphylococcus epidermidis (strain ATCC 12228 / FDA PCI 1200)</name>
    <dbReference type="NCBI Taxonomy" id="176280"/>
    <lineage>
        <taxon>Bacteria</taxon>
        <taxon>Bacillati</taxon>
        <taxon>Bacillota</taxon>
        <taxon>Bacilli</taxon>
        <taxon>Bacillales</taxon>
        <taxon>Staphylococcaceae</taxon>
        <taxon>Staphylococcus</taxon>
    </lineage>
</organism>